<name>CHBG_SALPC</name>
<dbReference type="EC" id="3.5.1.105" evidence="1"/>
<dbReference type="EMBL" id="CP000857">
    <property type="protein sequence ID" value="ACN46525.1"/>
    <property type="molecule type" value="Genomic_DNA"/>
</dbReference>
<dbReference type="RefSeq" id="WP_000442734.1">
    <property type="nucleotide sequence ID" value="NC_012125.1"/>
</dbReference>
<dbReference type="SMR" id="C0Q659"/>
<dbReference type="KEGG" id="sei:SPC_2413"/>
<dbReference type="HOGENOM" id="CLU_064244_4_1_6"/>
<dbReference type="UniPathway" id="UPA00349"/>
<dbReference type="Proteomes" id="UP000001599">
    <property type="component" value="Chromosome"/>
</dbReference>
<dbReference type="GO" id="GO:0005737">
    <property type="term" value="C:cytoplasm"/>
    <property type="evidence" value="ECO:0007669"/>
    <property type="project" value="UniProtKB-SubCell"/>
</dbReference>
<dbReference type="GO" id="GO:0036311">
    <property type="term" value="F:chitin disaccharide deacetylase activity"/>
    <property type="evidence" value="ECO:0007669"/>
    <property type="project" value="UniProtKB-UniRule"/>
</dbReference>
<dbReference type="GO" id="GO:0019213">
    <property type="term" value="F:deacetylase activity"/>
    <property type="evidence" value="ECO:0007669"/>
    <property type="project" value="TreeGrafter"/>
</dbReference>
<dbReference type="GO" id="GO:0046872">
    <property type="term" value="F:metal ion binding"/>
    <property type="evidence" value="ECO:0007669"/>
    <property type="project" value="UniProtKB-KW"/>
</dbReference>
<dbReference type="GO" id="GO:0006032">
    <property type="term" value="P:chitin catabolic process"/>
    <property type="evidence" value="ECO:0007669"/>
    <property type="project" value="UniProtKB-UniPathway"/>
</dbReference>
<dbReference type="GO" id="GO:0052777">
    <property type="term" value="P:diacetylchitobiose catabolic process"/>
    <property type="evidence" value="ECO:0007669"/>
    <property type="project" value="UniProtKB-UniRule"/>
</dbReference>
<dbReference type="GO" id="GO:0000272">
    <property type="term" value="P:polysaccharide catabolic process"/>
    <property type="evidence" value="ECO:0007669"/>
    <property type="project" value="UniProtKB-UniRule"/>
</dbReference>
<dbReference type="CDD" id="cd10803">
    <property type="entry name" value="YdjC_EF3048_like"/>
    <property type="match status" value="1"/>
</dbReference>
<dbReference type="FunFam" id="3.20.20.370:FF:000001">
    <property type="entry name" value="Chitooligosaccharide deacetylase"/>
    <property type="match status" value="1"/>
</dbReference>
<dbReference type="Gene3D" id="3.20.20.370">
    <property type="entry name" value="Glycoside hydrolase/deacetylase"/>
    <property type="match status" value="1"/>
</dbReference>
<dbReference type="HAMAP" id="MF_01246">
    <property type="entry name" value="COD"/>
    <property type="match status" value="1"/>
</dbReference>
<dbReference type="InterPro" id="IPR022948">
    <property type="entry name" value="COD_ChbG_bac"/>
</dbReference>
<dbReference type="InterPro" id="IPR011330">
    <property type="entry name" value="Glyco_hydro/deAcase_b/a-brl"/>
</dbReference>
<dbReference type="InterPro" id="IPR006879">
    <property type="entry name" value="YdjC-like"/>
</dbReference>
<dbReference type="NCBIfam" id="NF002559">
    <property type="entry name" value="PRK02134.1"/>
    <property type="match status" value="1"/>
</dbReference>
<dbReference type="PANTHER" id="PTHR31609:SF1">
    <property type="entry name" value="CARBOHYDRATE DEACETYLASE"/>
    <property type="match status" value="1"/>
</dbReference>
<dbReference type="PANTHER" id="PTHR31609">
    <property type="entry name" value="YDJC DEACETYLASE FAMILY MEMBER"/>
    <property type="match status" value="1"/>
</dbReference>
<dbReference type="Pfam" id="PF04794">
    <property type="entry name" value="YdjC"/>
    <property type="match status" value="1"/>
</dbReference>
<dbReference type="SUPFAM" id="SSF88713">
    <property type="entry name" value="Glycoside hydrolase/deacetylase"/>
    <property type="match status" value="1"/>
</dbReference>
<feature type="chain" id="PRO_1000165049" description="Chitooligosaccharide deacetylase">
    <location>
        <begin position="1"/>
        <end position="252"/>
    </location>
</feature>
<feature type="binding site" evidence="1">
    <location>
        <position position="61"/>
    </location>
    <ligand>
        <name>Mg(2+)</name>
        <dbReference type="ChEBI" id="CHEBI:18420"/>
    </ligand>
</feature>
<feature type="binding site" evidence="1">
    <location>
        <position position="125"/>
    </location>
    <ligand>
        <name>Mg(2+)</name>
        <dbReference type="ChEBI" id="CHEBI:18420"/>
    </ligand>
</feature>
<comment type="function">
    <text evidence="1">Involved in the degradation of chitin. ChbG is essential for growth on the acetylated chitooligosaccharides chitobiose and chitotriose but is dispensable for growth on cellobiose and chitosan dimer, the deacetylated form of chitobiose. Deacetylation of chitobiose-6-P and chitotriose-6-P is necessary for both the activation of the chb promoter by the regulatory protein ChbR and the hydrolysis of phosphorylated beta-glucosides by the phospho-beta-glucosidase ChbF. Catalyzes the removal of only one acetyl group from chitobiose-6-P to yield monoacetylchitobiose-6-P, the inducer of ChbR and the substrate of ChbF.</text>
</comment>
<comment type="catalytic activity">
    <reaction evidence="1">
        <text>N,N'-diacetylchitobiose + H2O = N-acetyl-beta-D-glucosaminyl-(1-&gt;4)-D-glucosamine + acetate</text>
        <dbReference type="Rhea" id="RHEA:27469"/>
        <dbReference type="ChEBI" id="CHEBI:15377"/>
        <dbReference type="ChEBI" id="CHEBI:28681"/>
        <dbReference type="ChEBI" id="CHEBI:30089"/>
        <dbReference type="ChEBI" id="CHEBI:59910"/>
        <dbReference type="EC" id="3.5.1.105"/>
    </reaction>
</comment>
<comment type="catalytic activity">
    <reaction evidence="1">
        <text>diacetylchitobiose-6'-phosphate + H2O = N'-monoacetylchitobiose-6'-phosphate + acetate</text>
        <dbReference type="Rhea" id="RHEA:35083"/>
        <dbReference type="ChEBI" id="CHEBI:15377"/>
        <dbReference type="ChEBI" id="CHEBI:30089"/>
        <dbReference type="ChEBI" id="CHEBI:64883"/>
        <dbReference type="ChEBI" id="CHEBI:71315"/>
    </reaction>
</comment>
<comment type="cofactor">
    <cofactor evidence="1">
        <name>Mg(2+)</name>
        <dbReference type="ChEBI" id="CHEBI:18420"/>
    </cofactor>
</comment>
<comment type="pathway">
    <text evidence="1">Glycan degradation; chitin degradation.</text>
</comment>
<comment type="subunit">
    <text evidence="1">Homodimer.</text>
</comment>
<comment type="subcellular location">
    <subcellularLocation>
        <location evidence="1">Cytoplasm</location>
    </subcellularLocation>
</comment>
<comment type="similarity">
    <text evidence="1">Belongs to the YdjC deacetylase family. ChbG subfamily.</text>
</comment>
<accession>C0Q659</accession>
<gene>
    <name evidence="1" type="primary">chbG</name>
    <name type="ordered locus">SPC_2413</name>
</gene>
<evidence type="ECO:0000255" key="1">
    <source>
        <dbReference type="HAMAP-Rule" id="MF_01246"/>
    </source>
</evidence>
<organism>
    <name type="scientific">Salmonella paratyphi C (strain RKS4594)</name>
    <dbReference type="NCBI Taxonomy" id="476213"/>
    <lineage>
        <taxon>Bacteria</taxon>
        <taxon>Pseudomonadati</taxon>
        <taxon>Pseudomonadota</taxon>
        <taxon>Gammaproteobacteria</taxon>
        <taxon>Enterobacterales</taxon>
        <taxon>Enterobacteriaceae</taxon>
        <taxon>Salmonella</taxon>
    </lineage>
</organism>
<reference key="1">
    <citation type="journal article" date="2009" name="PLoS ONE">
        <title>Salmonella paratyphi C: genetic divergence from Salmonella choleraesuis and pathogenic convergence with Salmonella typhi.</title>
        <authorList>
            <person name="Liu W.-Q."/>
            <person name="Feng Y."/>
            <person name="Wang Y."/>
            <person name="Zou Q.-H."/>
            <person name="Chen F."/>
            <person name="Guo J.-T."/>
            <person name="Peng Y.-H."/>
            <person name="Jin Y."/>
            <person name="Li Y.-G."/>
            <person name="Hu S.-N."/>
            <person name="Johnston R.N."/>
            <person name="Liu G.-R."/>
            <person name="Liu S.-L."/>
        </authorList>
    </citation>
    <scope>NUCLEOTIDE SEQUENCE [LARGE SCALE GENOMIC DNA]</scope>
    <source>
        <strain>RKS4594</strain>
    </source>
</reference>
<protein>
    <recommendedName>
        <fullName evidence="1">Chitooligosaccharide deacetylase</fullName>
        <shortName evidence="1">COD</shortName>
        <ecNumber evidence="1">3.5.1.105</ecNumber>
    </recommendedName>
    <alternativeName>
        <fullName evidence="1">Chitin disaccharide deacetylase</fullName>
    </alternativeName>
    <alternativeName>
        <fullName evidence="1">Chitobiose deacetylase</fullName>
    </alternativeName>
    <alternativeName>
        <fullName evidence="1">Chitobiose-6P deacetylase</fullName>
    </alternativeName>
    <alternativeName>
        <fullName evidence="1">Chitotriose deacetylase</fullName>
    </alternativeName>
    <alternativeName>
        <fullName evidence="1">Chitotriose-6P deacetylase</fullName>
    </alternativeName>
</protein>
<keyword id="KW-0119">Carbohydrate metabolism</keyword>
<keyword id="KW-0146">Chitin degradation</keyword>
<keyword id="KW-0963">Cytoplasm</keyword>
<keyword id="KW-0378">Hydrolase</keyword>
<keyword id="KW-0460">Magnesium</keyword>
<keyword id="KW-0479">Metal-binding</keyword>
<keyword id="KW-0624">Polysaccharide degradation</keyword>
<sequence length="252" mass="28057">MERVLIVNADDFGLSKGQNYGIVEAYRNGVVTSTTALVNGEAIDHAAQLSRELPALGVGMHFVLTLGKPVSEMPGLTRDGLLGKWIWQMAEEDTLPLDEIAHELACQYQRFIDVFGREPTHLDSHHHVHMFPQIFPIVARFAAQRGIALRIDRQTVLNADDLPSDLRSTQGFSSEFYGEEITEACFLRILDASTHRGEASLEVMCHPAFVDNIIRQSAYCYPRLTELEVLTSASLKAAIAERGYRPGSFLDI</sequence>
<proteinExistence type="inferred from homology"/>